<organism>
    <name type="scientific">Streptococcus pyogenes serotype M5 (strain Manfredo)</name>
    <dbReference type="NCBI Taxonomy" id="160491"/>
    <lineage>
        <taxon>Bacteria</taxon>
        <taxon>Bacillati</taxon>
        <taxon>Bacillota</taxon>
        <taxon>Bacilli</taxon>
        <taxon>Lactobacillales</taxon>
        <taxon>Streptococcaceae</taxon>
        <taxon>Streptococcus</taxon>
    </lineage>
</organism>
<evidence type="ECO:0000255" key="1">
    <source>
        <dbReference type="HAMAP-Rule" id="MF_01539"/>
    </source>
</evidence>
<feature type="chain" id="PRO_0000300199" description="tRNA(Met) cytidine acetate ligase">
    <location>
        <begin position="1"/>
        <end position="368"/>
    </location>
</feature>
<feature type="binding site" evidence="1">
    <location>
        <begin position="7"/>
        <end position="20"/>
    </location>
    <ligand>
        <name>ATP</name>
        <dbReference type="ChEBI" id="CHEBI:30616"/>
    </ligand>
</feature>
<feature type="binding site" evidence="1">
    <location>
        <position position="96"/>
    </location>
    <ligand>
        <name>ATP</name>
        <dbReference type="ChEBI" id="CHEBI:30616"/>
    </ligand>
</feature>
<feature type="binding site" evidence="1">
    <location>
        <position position="152"/>
    </location>
    <ligand>
        <name>ATP</name>
        <dbReference type="ChEBI" id="CHEBI:30616"/>
    </ligand>
</feature>
<feature type="binding site" evidence="1">
    <location>
        <position position="175"/>
    </location>
    <ligand>
        <name>ATP</name>
        <dbReference type="ChEBI" id="CHEBI:30616"/>
    </ligand>
</feature>
<gene>
    <name evidence="1" type="primary">tmcAL</name>
    <name type="ordered locus">SpyM51587</name>
</gene>
<keyword id="KW-0067">ATP-binding</keyword>
<keyword id="KW-0963">Cytoplasm</keyword>
<keyword id="KW-0436">Ligase</keyword>
<keyword id="KW-0547">Nucleotide-binding</keyword>
<keyword id="KW-0694">RNA-binding</keyword>
<keyword id="KW-0819">tRNA processing</keyword>
<keyword id="KW-0820">tRNA-binding</keyword>
<reference key="1">
    <citation type="journal article" date="2007" name="J. Bacteriol.">
        <title>Complete genome of acute rheumatic fever-associated serotype M5 Streptococcus pyogenes strain Manfredo.</title>
        <authorList>
            <person name="Holden M.T.G."/>
            <person name="Scott A."/>
            <person name="Cherevach I."/>
            <person name="Chillingworth T."/>
            <person name="Churcher C."/>
            <person name="Cronin A."/>
            <person name="Dowd L."/>
            <person name="Feltwell T."/>
            <person name="Hamlin N."/>
            <person name="Holroyd S."/>
            <person name="Jagels K."/>
            <person name="Moule S."/>
            <person name="Mungall K."/>
            <person name="Quail M.A."/>
            <person name="Price C."/>
            <person name="Rabbinowitsch E."/>
            <person name="Sharp S."/>
            <person name="Skelton J."/>
            <person name="Whitehead S."/>
            <person name="Barrell B.G."/>
            <person name="Kehoe M."/>
            <person name="Parkhill J."/>
        </authorList>
    </citation>
    <scope>NUCLEOTIDE SEQUENCE [LARGE SCALE GENOMIC DNA]</scope>
    <source>
        <strain>Manfredo</strain>
    </source>
</reference>
<proteinExistence type="inferred from homology"/>
<sequence length="368" mass="41687">MTVTGIIAEFNPFHNGHKYLLETVEGLKIIAMSGNFMQRGEPALIDKWIRSEMALKNGADIVVELPFFVSVQSADYFAQGAIDILCQLGIQQLAFGTEDVIDYQKLIKVYEKKSEQMTAYLSTLEDTLSYPQKTQKMWEIFAGVKFSGQTPNHILGLSYAKASAGKHIQLCPIKRQGAAYHSKDKNHLLASASAIRQHLNDWDFISHSVPNAGLLINNPHMSWDHYFSFLKYQILNHSDLTSIFQVNDELASRIKKAIKVSQNIDHLVDTVATKRYTKARVRRILIYILVNAKEPTLPKGIHILGFTSKGQAHLKKLKKSRPLITRIGAETWDEMTQKADSIYQLGHQDIPEQSFGRIPIIIKNERLN</sequence>
<dbReference type="EC" id="6.3.4.-" evidence="1"/>
<dbReference type="EMBL" id="AM295007">
    <property type="protein sequence ID" value="CAM30908.1"/>
    <property type="molecule type" value="Genomic_DNA"/>
</dbReference>
<dbReference type="RefSeq" id="WP_011889138.1">
    <property type="nucleotide sequence ID" value="NC_009332.1"/>
</dbReference>
<dbReference type="SMR" id="A2RGC9"/>
<dbReference type="KEGG" id="spf:SpyM51587"/>
<dbReference type="HOGENOM" id="CLU_038915_0_2_9"/>
<dbReference type="GO" id="GO:0005737">
    <property type="term" value="C:cytoplasm"/>
    <property type="evidence" value="ECO:0007669"/>
    <property type="project" value="UniProtKB-SubCell"/>
</dbReference>
<dbReference type="GO" id="GO:0005524">
    <property type="term" value="F:ATP binding"/>
    <property type="evidence" value="ECO:0007669"/>
    <property type="project" value="UniProtKB-KW"/>
</dbReference>
<dbReference type="GO" id="GO:0016879">
    <property type="term" value="F:ligase activity, forming carbon-nitrogen bonds"/>
    <property type="evidence" value="ECO:0007669"/>
    <property type="project" value="UniProtKB-UniRule"/>
</dbReference>
<dbReference type="GO" id="GO:0000049">
    <property type="term" value="F:tRNA binding"/>
    <property type="evidence" value="ECO:0007669"/>
    <property type="project" value="UniProtKB-KW"/>
</dbReference>
<dbReference type="GO" id="GO:0006400">
    <property type="term" value="P:tRNA modification"/>
    <property type="evidence" value="ECO:0007669"/>
    <property type="project" value="UniProtKB-UniRule"/>
</dbReference>
<dbReference type="Gene3D" id="3.40.50.620">
    <property type="entry name" value="HUPs"/>
    <property type="match status" value="1"/>
</dbReference>
<dbReference type="HAMAP" id="MF_01539">
    <property type="entry name" value="TmcAL"/>
    <property type="match status" value="1"/>
</dbReference>
<dbReference type="InterPro" id="IPR014729">
    <property type="entry name" value="Rossmann-like_a/b/a_fold"/>
</dbReference>
<dbReference type="InterPro" id="IPR008513">
    <property type="entry name" value="tRNA(Met)_cyd_acetate_ligase"/>
</dbReference>
<dbReference type="NCBIfam" id="NF010191">
    <property type="entry name" value="PRK13670.1"/>
    <property type="match status" value="1"/>
</dbReference>
<dbReference type="PANTHER" id="PTHR37825">
    <property type="entry name" value="TRNA(MET) CYTIDINE ACETATE LIGASE"/>
    <property type="match status" value="1"/>
</dbReference>
<dbReference type="PANTHER" id="PTHR37825:SF1">
    <property type="entry name" value="TRNA(MET) CYTIDINE ACETATE LIGASE"/>
    <property type="match status" value="1"/>
</dbReference>
<dbReference type="Pfam" id="PF05636">
    <property type="entry name" value="HIGH_NTase1"/>
    <property type="match status" value="1"/>
</dbReference>
<dbReference type="SUPFAM" id="SSF52374">
    <property type="entry name" value="Nucleotidylyl transferase"/>
    <property type="match status" value="1"/>
</dbReference>
<name>TMCAL_STRPG</name>
<protein>
    <recommendedName>
        <fullName evidence="1">tRNA(Met) cytidine acetate ligase</fullName>
        <ecNumber evidence="1">6.3.4.-</ecNumber>
    </recommendedName>
</protein>
<accession>A2RGC9</accession>
<comment type="function">
    <text evidence="1">Catalyzes the formation of N(4)-acetylcytidine (ac(4)C) at the wobble position of elongator tRNA(Met), using acetate and ATP as substrates. First activates an acetate ion to form acetyladenylate (Ac-AMP) and then transfers the acetyl group to tRNA to form ac(4)C34.</text>
</comment>
<comment type="catalytic activity">
    <reaction evidence="1">
        <text>cytidine(34) in elongator tRNA(Met) + acetate + ATP = N(4)-acetylcytidine(34) in elongator tRNA(Met) + AMP + diphosphate</text>
        <dbReference type="Rhea" id="RHEA:58144"/>
        <dbReference type="Rhea" id="RHEA-COMP:10693"/>
        <dbReference type="Rhea" id="RHEA-COMP:10694"/>
        <dbReference type="ChEBI" id="CHEBI:30089"/>
        <dbReference type="ChEBI" id="CHEBI:30616"/>
        <dbReference type="ChEBI" id="CHEBI:33019"/>
        <dbReference type="ChEBI" id="CHEBI:74900"/>
        <dbReference type="ChEBI" id="CHEBI:82748"/>
        <dbReference type="ChEBI" id="CHEBI:456215"/>
    </reaction>
</comment>
<comment type="subcellular location">
    <subcellularLocation>
        <location evidence="1">Cytoplasm</location>
    </subcellularLocation>
</comment>
<comment type="similarity">
    <text evidence="1">Belongs to the TmcAL family.</text>
</comment>